<sequence length="613" mass="66635">MTPPPASAWTRSKPPLLRFLDTCLNEFSAETSGAVADYIPELGNADPAYFGISLATLDGHVYEVGDSRVPFTIQSMSKPFVFALALDLLGAGRVESAIGVEPSGDPFNSIRLNSDNHPFNPMVNAGAIACTGLIYDSKGAEAFEQIRLALSRFAGRDLAVDEAVYSSESQTGDRNRAIGYLLKTNAVISDNVAAVLDVYFRQCAVLVTARDIAVMAATLANRGINPVTGEQVMSAYAISRTLSVMTSSGMYDYAGEWIYRIGIPAKSGVGGGILAALPARLGLGSYSPKLDKHGNSVRGIKVCEALSSHYDLHMLNRSDDARNAVIADYDIGKSPSRRVRRAQEREILAAHEQEVRIIELVGTLSLSAVDYVSRRLAGRPRPQFVIFDLHRVTSTTRAGARLVAEAFEELAALNVTVVLSGVRRASKEWNTLREWTAELKNVRDFYLLDTAIEWAEDQIVYRYGGSIDFHETTELAEQPLLEGLSADELAELGAICTIRTYQSGAKILTTGDPADALFFLRSGAVHVTLPDGVRLATLTAGMAFGEMALLEQTRSADVFADMAATAFEAPLKDFERFREQHPRASERIMRNLAQLLADRLIVANAKVDILTST</sequence>
<evidence type="ECO:0000250" key="1"/>
<evidence type="ECO:0000305" key="2"/>
<accession>Q89NA7</accession>
<comment type="catalytic activity">
    <reaction>
        <text>L-glutamine + H2O = L-glutamate + NH4(+)</text>
        <dbReference type="Rhea" id="RHEA:15889"/>
        <dbReference type="ChEBI" id="CHEBI:15377"/>
        <dbReference type="ChEBI" id="CHEBI:28938"/>
        <dbReference type="ChEBI" id="CHEBI:29985"/>
        <dbReference type="ChEBI" id="CHEBI:58359"/>
        <dbReference type="EC" id="3.5.1.2"/>
    </reaction>
</comment>
<comment type="subunit">
    <text evidence="1">Homotetramer.</text>
</comment>
<comment type="similarity">
    <text evidence="2">Belongs to the glutaminase family.</text>
</comment>
<feature type="chain" id="PRO_0000110597" description="Glutaminase 1">
    <location>
        <begin position="1"/>
        <end position="613"/>
    </location>
</feature>
<feature type="domain" description="STAS">
    <location>
        <begin position="345"/>
        <end position="457"/>
    </location>
</feature>
<feature type="region of interest" description="Glutaminase">
    <location>
        <begin position="33"/>
        <end position="315"/>
    </location>
</feature>
<feature type="binding site" evidence="1">
    <location>
        <position position="75"/>
    </location>
    <ligand>
        <name>substrate</name>
    </ligand>
</feature>
<feature type="binding site" evidence="1">
    <location>
        <position position="124"/>
    </location>
    <ligand>
        <name>substrate</name>
    </ligand>
</feature>
<feature type="binding site" evidence="1">
    <location>
        <position position="168"/>
    </location>
    <ligand>
        <name>substrate</name>
    </ligand>
</feature>
<feature type="binding site" evidence="1">
    <location>
        <position position="175"/>
    </location>
    <ligand>
        <name>substrate</name>
    </ligand>
</feature>
<feature type="binding site" evidence="1">
    <location>
        <position position="199"/>
    </location>
    <ligand>
        <name>substrate</name>
    </ligand>
</feature>
<feature type="binding site" evidence="1">
    <location>
        <position position="251"/>
    </location>
    <ligand>
        <name>substrate</name>
    </ligand>
</feature>
<feature type="binding site" evidence="1">
    <location>
        <position position="269"/>
    </location>
    <ligand>
        <name>substrate</name>
    </ligand>
</feature>
<feature type="binding site">
    <location>
        <begin position="480"/>
        <end position="595"/>
    </location>
    <ligand>
        <name>a nucleoside 3',5'-cyclic phosphate</name>
        <dbReference type="ChEBI" id="CHEBI:58464"/>
    </ligand>
</feature>
<dbReference type="EC" id="3.5.1.2"/>
<dbReference type="EMBL" id="BA000040">
    <property type="protein sequence ID" value="BAC49200.1"/>
    <property type="molecule type" value="Genomic_DNA"/>
</dbReference>
<dbReference type="RefSeq" id="NP_770575.1">
    <property type="nucleotide sequence ID" value="NC_004463.1"/>
</dbReference>
<dbReference type="RefSeq" id="WP_011086712.1">
    <property type="nucleotide sequence ID" value="NC_004463.1"/>
</dbReference>
<dbReference type="SMR" id="Q89NA7"/>
<dbReference type="STRING" id="224911.AAV28_16690"/>
<dbReference type="EnsemblBacteria" id="BAC49200">
    <property type="protein sequence ID" value="BAC49200"/>
    <property type="gene ID" value="BAC49200"/>
</dbReference>
<dbReference type="GeneID" id="46490940"/>
<dbReference type="KEGG" id="bja:bll3935"/>
<dbReference type="PATRIC" id="fig|224911.44.peg.3628"/>
<dbReference type="eggNOG" id="COG2066">
    <property type="taxonomic scope" value="Bacteria"/>
</dbReference>
<dbReference type="eggNOG" id="COG2905">
    <property type="taxonomic scope" value="Bacteria"/>
</dbReference>
<dbReference type="HOGENOM" id="CLU_027932_2_1_5"/>
<dbReference type="InParanoid" id="Q89NA7"/>
<dbReference type="OrthoDB" id="9788822at2"/>
<dbReference type="PhylomeDB" id="Q89NA7"/>
<dbReference type="Proteomes" id="UP000002526">
    <property type="component" value="Chromosome"/>
</dbReference>
<dbReference type="GO" id="GO:0004359">
    <property type="term" value="F:glutaminase activity"/>
    <property type="evidence" value="ECO:0000318"/>
    <property type="project" value="GO_Central"/>
</dbReference>
<dbReference type="GO" id="GO:0006537">
    <property type="term" value="P:glutamate biosynthetic process"/>
    <property type="evidence" value="ECO:0000318"/>
    <property type="project" value="GO_Central"/>
</dbReference>
<dbReference type="GO" id="GO:0006543">
    <property type="term" value="P:glutamine catabolic process"/>
    <property type="evidence" value="ECO:0000318"/>
    <property type="project" value="GO_Central"/>
</dbReference>
<dbReference type="CDD" id="cd00038">
    <property type="entry name" value="CAP_ED"/>
    <property type="match status" value="1"/>
</dbReference>
<dbReference type="CDD" id="cd07042">
    <property type="entry name" value="STAS_SulP_like_sulfate_transporter"/>
    <property type="match status" value="1"/>
</dbReference>
<dbReference type="FunFam" id="3.40.710.10:FF:000005">
    <property type="entry name" value="Glutaminase"/>
    <property type="match status" value="1"/>
</dbReference>
<dbReference type="FunFam" id="2.60.120.10:FF:000252">
    <property type="entry name" value="Glutaminase 2"/>
    <property type="match status" value="1"/>
</dbReference>
<dbReference type="Gene3D" id="3.40.710.10">
    <property type="entry name" value="DD-peptidase/beta-lactamase superfamily"/>
    <property type="match status" value="1"/>
</dbReference>
<dbReference type="Gene3D" id="2.60.120.10">
    <property type="entry name" value="Jelly Rolls"/>
    <property type="match status" value="1"/>
</dbReference>
<dbReference type="Gene3D" id="3.30.750.24">
    <property type="entry name" value="STAS domain"/>
    <property type="match status" value="1"/>
</dbReference>
<dbReference type="HAMAP" id="MF_00313">
    <property type="entry name" value="Glutaminase"/>
    <property type="match status" value="1"/>
</dbReference>
<dbReference type="InterPro" id="IPR012338">
    <property type="entry name" value="Beta-lactam/transpept-like"/>
</dbReference>
<dbReference type="InterPro" id="IPR000595">
    <property type="entry name" value="cNMP-bd_dom"/>
</dbReference>
<dbReference type="InterPro" id="IPR018490">
    <property type="entry name" value="cNMP-bd_dom_sf"/>
</dbReference>
<dbReference type="InterPro" id="IPR015868">
    <property type="entry name" value="Glutaminase"/>
</dbReference>
<dbReference type="InterPro" id="IPR014710">
    <property type="entry name" value="RmlC-like_jellyroll"/>
</dbReference>
<dbReference type="InterPro" id="IPR002645">
    <property type="entry name" value="STAS_dom"/>
</dbReference>
<dbReference type="InterPro" id="IPR036513">
    <property type="entry name" value="STAS_dom_sf"/>
</dbReference>
<dbReference type="NCBIfam" id="TIGR03814">
    <property type="entry name" value="Gln_ase"/>
    <property type="match status" value="1"/>
</dbReference>
<dbReference type="PANTHER" id="PTHR12544">
    <property type="entry name" value="GLUTAMINASE"/>
    <property type="match status" value="1"/>
</dbReference>
<dbReference type="PANTHER" id="PTHR12544:SF29">
    <property type="entry name" value="GLUTAMINASE"/>
    <property type="match status" value="1"/>
</dbReference>
<dbReference type="Pfam" id="PF00027">
    <property type="entry name" value="cNMP_binding"/>
    <property type="match status" value="1"/>
</dbReference>
<dbReference type="Pfam" id="PF04960">
    <property type="entry name" value="Glutaminase"/>
    <property type="match status" value="1"/>
</dbReference>
<dbReference type="Pfam" id="PF01740">
    <property type="entry name" value="STAS"/>
    <property type="match status" value="1"/>
</dbReference>
<dbReference type="SMART" id="SM00100">
    <property type="entry name" value="cNMP"/>
    <property type="match status" value="1"/>
</dbReference>
<dbReference type="SUPFAM" id="SSF56601">
    <property type="entry name" value="beta-lactamase/transpeptidase-like"/>
    <property type="match status" value="1"/>
</dbReference>
<dbReference type="SUPFAM" id="SSF51206">
    <property type="entry name" value="cAMP-binding domain-like"/>
    <property type="match status" value="1"/>
</dbReference>
<dbReference type="SUPFAM" id="SSF52091">
    <property type="entry name" value="SpoIIaa-like"/>
    <property type="match status" value="1"/>
</dbReference>
<dbReference type="PROSITE" id="PS50042">
    <property type="entry name" value="CNMP_BINDING_3"/>
    <property type="match status" value="1"/>
</dbReference>
<dbReference type="PROSITE" id="PS50801">
    <property type="entry name" value="STAS"/>
    <property type="match status" value="1"/>
</dbReference>
<keyword id="KW-0378">Hydrolase</keyword>
<keyword id="KW-1185">Reference proteome</keyword>
<protein>
    <recommendedName>
        <fullName>Glutaminase 1</fullName>
        <ecNumber>3.5.1.2</ecNumber>
    </recommendedName>
</protein>
<organism>
    <name type="scientific">Bradyrhizobium diazoefficiens (strain JCM 10833 / BCRC 13528 / IAM 13628 / NBRC 14792 / USDA 110)</name>
    <dbReference type="NCBI Taxonomy" id="224911"/>
    <lineage>
        <taxon>Bacteria</taxon>
        <taxon>Pseudomonadati</taxon>
        <taxon>Pseudomonadota</taxon>
        <taxon>Alphaproteobacteria</taxon>
        <taxon>Hyphomicrobiales</taxon>
        <taxon>Nitrobacteraceae</taxon>
        <taxon>Bradyrhizobium</taxon>
    </lineage>
</organism>
<name>GLSA1_BRADU</name>
<reference key="1">
    <citation type="journal article" date="2002" name="DNA Res.">
        <title>Complete genomic sequence of nitrogen-fixing symbiotic bacterium Bradyrhizobium japonicum USDA110.</title>
        <authorList>
            <person name="Kaneko T."/>
            <person name="Nakamura Y."/>
            <person name="Sato S."/>
            <person name="Minamisawa K."/>
            <person name="Uchiumi T."/>
            <person name="Sasamoto S."/>
            <person name="Watanabe A."/>
            <person name="Idesawa K."/>
            <person name="Iriguchi M."/>
            <person name="Kawashima K."/>
            <person name="Kohara M."/>
            <person name="Matsumoto M."/>
            <person name="Shimpo S."/>
            <person name="Tsuruoka H."/>
            <person name="Wada T."/>
            <person name="Yamada M."/>
            <person name="Tabata S."/>
        </authorList>
    </citation>
    <scope>NUCLEOTIDE SEQUENCE [LARGE SCALE GENOMIC DNA]</scope>
    <source>
        <strain>JCM 10833 / BCRC 13528 / IAM 13628 / NBRC 14792 / USDA 110</strain>
    </source>
</reference>
<gene>
    <name type="primary">glsA1</name>
    <name type="ordered locus">bll3935</name>
</gene>
<proteinExistence type="inferred from homology"/>